<protein>
    <recommendedName>
        <fullName>CCR4-NOT transcription complex subunit 7</fullName>
        <ecNumber>3.1.13.4</ecNumber>
    </recommendedName>
    <alternativeName>
        <fullName>BTG1-binding factor 1</fullName>
    </alternativeName>
    <alternativeName>
        <fullName>CCR4-associated factor 1</fullName>
        <shortName>CAF-1</shortName>
    </alternativeName>
    <alternativeName>
        <fullName>Caf1a</fullName>
    </alternativeName>
</protein>
<evidence type="ECO:0000250" key="1">
    <source>
        <dbReference type="UniProtKB" id="Q60809"/>
    </source>
</evidence>
<evidence type="ECO:0000269" key="2">
    <source>
    </source>
</evidence>
<evidence type="ECO:0000269" key="3">
    <source>
    </source>
</evidence>
<evidence type="ECO:0000269" key="4">
    <source>
    </source>
</evidence>
<evidence type="ECO:0000269" key="5">
    <source>
    </source>
</evidence>
<evidence type="ECO:0000269" key="6">
    <source>
    </source>
</evidence>
<evidence type="ECO:0000269" key="7">
    <source>
    </source>
</evidence>
<evidence type="ECO:0000269" key="8">
    <source>
    </source>
</evidence>
<evidence type="ECO:0000269" key="9">
    <source>
    </source>
</evidence>
<evidence type="ECO:0000269" key="10">
    <source>
    </source>
</evidence>
<evidence type="ECO:0000269" key="11">
    <source>
    </source>
</evidence>
<evidence type="ECO:0000269" key="12">
    <source>
    </source>
</evidence>
<evidence type="ECO:0000269" key="13">
    <source>
    </source>
</evidence>
<evidence type="ECO:0000269" key="14">
    <source>
    </source>
</evidence>
<evidence type="ECO:0000269" key="15">
    <source>
    </source>
</evidence>
<evidence type="ECO:0000303" key="16">
    <source>
    </source>
</evidence>
<evidence type="ECO:0000305" key="17"/>
<evidence type="ECO:0007829" key="18">
    <source>
        <dbReference type="PDB" id="2D5R"/>
    </source>
</evidence>
<evidence type="ECO:0007829" key="19">
    <source>
        <dbReference type="PDB" id="7AX1"/>
    </source>
</evidence>
<accession>Q9UIV1</accession>
<accession>A8MZM5</accession>
<accession>B3KMP1</accession>
<accession>B3KN35</accession>
<accession>D3DSP6</accession>
<accession>G3V108</accession>
<accession>Q7Z530</accession>
<dbReference type="EC" id="3.1.13.4"/>
<dbReference type="EMBL" id="L46722">
    <property type="protein sequence ID" value="AAF01500.1"/>
    <property type="status" value="ALT_FRAME"/>
    <property type="molecule type" value="mRNA"/>
</dbReference>
<dbReference type="EMBL" id="AF086915">
    <property type="protein sequence ID" value="AAP97145.1"/>
    <property type="molecule type" value="mRNA"/>
</dbReference>
<dbReference type="EMBL" id="AK021808">
    <property type="protein sequence ID" value="BAG51053.1"/>
    <property type="molecule type" value="mRNA"/>
</dbReference>
<dbReference type="EMBL" id="AK023466">
    <property type="protein sequence ID" value="BAG51197.1"/>
    <property type="molecule type" value="mRNA"/>
</dbReference>
<dbReference type="EMBL" id="AC091050">
    <property type="status" value="NOT_ANNOTATED_CDS"/>
    <property type="molecule type" value="Genomic_DNA"/>
</dbReference>
<dbReference type="EMBL" id="CH471080">
    <property type="protein sequence ID" value="EAW63820.1"/>
    <property type="molecule type" value="Genomic_DNA"/>
</dbReference>
<dbReference type="EMBL" id="CH471080">
    <property type="protein sequence ID" value="EAW63821.1"/>
    <property type="molecule type" value="Genomic_DNA"/>
</dbReference>
<dbReference type="EMBL" id="CH471080">
    <property type="protein sequence ID" value="EAW63822.1"/>
    <property type="molecule type" value="Genomic_DNA"/>
</dbReference>
<dbReference type="EMBL" id="CH471080">
    <property type="protein sequence ID" value="EAW63823.1"/>
    <property type="molecule type" value="Genomic_DNA"/>
</dbReference>
<dbReference type="EMBL" id="BC060852">
    <property type="protein sequence ID" value="AAH60852.1"/>
    <property type="molecule type" value="mRNA"/>
</dbReference>
<dbReference type="EMBL" id="BC070187">
    <property type="protein sequence ID" value="AAH70187.1"/>
    <property type="molecule type" value="mRNA"/>
</dbReference>
<dbReference type="CCDS" id="CCDS55202.1">
    <molecule id="Q9UIV1-2"/>
</dbReference>
<dbReference type="CCDS" id="CCDS6000.2">
    <molecule id="Q9UIV1-1"/>
</dbReference>
<dbReference type="RefSeq" id="NP_001309016.1">
    <molecule id="Q9UIV1-2"/>
    <property type="nucleotide sequence ID" value="NM_001322087.2"/>
</dbReference>
<dbReference type="RefSeq" id="NP_001309017.1">
    <molecule id="Q9UIV1-2"/>
    <property type="nucleotide sequence ID" value="NM_001322088.2"/>
</dbReference>
<dbReference type="RefSeq" id="NP_001309018.1">
    <molecule id="Q9UIV1-2"/>
    <property type="nucleotide sequence ID" value="NM_001322089.2"/>
</dbReference>
<dbReference type="RefSeq" id="NP_001309019.1">
    <molecule id="Q9UIV1-1"/>
    <property type="nucleotide sequence ID" value="NM_001322090.2"/>
</dbReference>
<dbReference type="RefSeq" id="NP_001309020.1">
    <molecule id="Q9UIV1-1"/>
    <property type="nucleotide sequence ID" value="NM_001322091.2"/>
</dbReference>
<dbReference type="RefSeq" id="NP_001309021.1">
    <molecule id="Q9UIV1-1"/>
    <property type="nucleotide sequence ID" value="NM_001322092.2"/>
</dbReference>
<dbReference type="RefSeq" id="NP_001309022.1">
    <property type="nucleotide sequence ID" value="NM_001322093.1"/>
</dbReference>
<dbReference type="RefSeq" id="NP_001309023.1">
    <property type="nucleotide sequence ID" value="NM_001322094.1"/>
</dbReference>
<dbReference type="RefSeq" id="NP_001309024.1">
    <property type="nucleotide sequence ID" value="NM_001322095.1"/>
</dbReference>
<dbReference type="RefSeq" id="NP_001309025.1">
    <property type="nucleotide sequence ID" value="NM_001322096.1"/>
</dbReference>
<dbReference type="RefSeq" id="NP_001309026.1">
    <property type="nucleotide sequence ID" value="NM_001322097.1"/>
</dbReference>
<dbReference type="RefSeq" id="NP_001309027.1">
    <property type="nucleotide sequence ID" value="NM_001322098.1"/>
</dbReference>
<dbReference type="RefSeq" id="NP_001309028.1">
    <property type="nucleotide sequence ID" value="NM_001322099.1"/>
</dbReference>
<dbReference type="RefSeq" id="NP_001309029.1">
    <property type="nucleotide sequence ID" value="NM_001322100.1"/>
</dbReference>
<dbReference type="RefSeq" id="NP_037486.2">
    <molecule id="Q9UIV1-1"/>
    <property type="nucleotide sequence ID" value="NM_013354.7"/>
</dbReference>
<dbReference type="RefSeq" id="NP_473367.2">
    <molecule id="Q9UIV1-2"/>
    <property type="nucleotide sequence ID" value="NM_054026.4"/>
</dbReference>
<dbReference type="RefSeq" id="XP_005273538.1">
    <molecule id="Q9UIV1-1"/>
    <property type="nucleotide sequence ID" value="XM_005273481.4"/>
</dbReference>
<dbReference type="RefSeq" id="XP_047277685.1">
    <molecule id="Q9UIV1-1"/>
    <property type="nucleotide sequence ID" value="XM_047421729.1"/>
</dbReference>
<dbReference type="RefSeq" id="XP_047277686.1">
    <molecule id="Q9UIV1-1"/>
    <property type="nucleotide sequence ID" value="XM_047421730.1"/>
</dbReference>
<dbReference type="RefSeq" id="XP_047277687.1">
    <molecule id="Q9UIV1-1"/>
    <property type="nucleotide sequence ID" value="XM_047421731.1"/>
</dbReference>
<dbReference type="RefSeq" id="XP_054216351.1">
    <molecule id="Q9UIV1-1"/>
    <property type="nucleotide sequence ID" value="XM_054360376.1"/>
</dbReference>
<dbReference type="RefSeq" id="XP_054216352.1">
    <molecule id="Q9UIV1-1"/>
    <property type="nucleotide sequence ID" value="XM_054360377.1"/>
</dbReference>
<dbReference type="RefSeq" id="XP_054216353.1">
    <molecule id="Q9UIV1-1"/>
    <property type="nucleotide sequence ID" value="XM_054360378.1"/>
</dbReference>
<dbReference type="RefSeq" id="XP_054216354.1">
    <molecule id="Q9UIV1-1"/>
    <property type="nucleotide sequence ID" value="XM_054360379.1"/>
</dbReference>
<dbReference type="PDB" id="2D5R">
    <property type="method" value="X-ray"/>
    <property type="resolution" value="2.50 A"/>
    <property type="chains" value="A=11-262"/>
</dbReference>
<dbReference type="PDB" id="4GMJ">
    <property type="method" value="X-ray"/>
    <property type="resolution" value="2.70 A"/>
    <property type="chains" value="B/D/F=1-285"/>
</dbReference>
<dbReference type="PDB" id="7AX1">
    <property type="method" value="X-ray"/>
    <property type="resolution" value="3.30 A"/>
    <property type="chains" value="B=2-285"/>
</dbReference>
<dbReference type="PDB" id="7VOI">
    <property type="method" value="X-ray"/>
    <property type="resolution" value="4.38 A"/>
    <property type="chains" value="B=1-285"/>
</dbReference>
<dbReference type="PDBsum" id="2D5R"/>
<dbReference type="PDBsum" id="4GMJ"/>
<dbReference type="PDBsum" id="7AX1"/>
<dbReference type="PDBsum" id="7VOI"/>
<dbReference type="SMR" id="Q9UIV1"/>
<dbReference type="BioGRID" id="118938">
    <property type="interactions" value="150"/>
</dbReference>
<dbReference type="ComplexPortal" id="CPX-2522">
    <property type="entry name" value="CCR4-NOT mRNA deadenylase complex, CNOT6L-CNOT7 variant"/>
</dbReference>
<dbReference type="ComplexPortal" id="CPX-707">
    <property type="entry name" value="CCR4-NOT mRNA deadenylase complex, CNOT6-CNOT7 variant"/>
</dbReference>
<dbReference type="CORUM" id="Q9UIV1"/>
<dbReference type="DIP" id="DIP-41902N"/>
<dbReference type="FunCoup" id="Q9UIV1">
    <property type="interactions" value="4377"/>
</dbReference>
<dbReference type="IntAct" id="Q9UIV1">
    <property type="interactions" value="77"/>
</dbReference>
<dbReference type="MINT" id="Q9UIV1"/>
<dbReference type="STRING" id="9606.ENSP00000355279"/>
<dbReference type="BindingDB" id="Q9UIV1"/>
<dbReference type="ChEMBL" id="CHEMBL3616361"/>
<dbReference type="GlyGen" id="Q9UIV1">
    <property type="glycosylation" value="1 site, 1 O-linked glycan (1 site)"/>
</dbReference>
<dbReference type="iPTMnet" id="Q9UIV1"/>
<dbReference type="PhosphoSitePlus" id="Q9UIV1"/>
<dbReference type="BioMuta" id="CNOT7"/>
<dbReference type="DMDM" id="41713629"/>
<dbReference type="jPOST" id="Q9UIV1"/>
<dbReference type="MassIVE" id="Q9UIV1"/>
<dbReference type="PaxDb" id="9606-ENSP00000355279"/>
<dbReference type="PeptideAtlas" id="Q9UIV1"/>
<dbReference type="ProteomicsDB" id="32220"/>
<dbReference type="ProteomicsDB" id="84569">
    <molecule id="Q9UIV1-1"/>
</dbReference>
<dbReference type="Pumba" id="Q9UIV1"/>
<dbReference type="Antibodypedia" id="22252">
    <property type="antibodies" value="203 antibodies from 28 providers"/>
</dbReference>
<dbReference type="DNASU" id="29883"/>
<dbReference type="Ensembl" id="ENST00000361272.9">
    <molecule id="Q9UIV1-1"/>
    <property type="protein sequence ID" value="ENSP00000355279.4"/>
    <property type="gene ID" value="ENSG00000198791.12"/>
</dbReference>
<dbReference type="Ensembl" id="ENST00000523917.5">
    <molecule id="Q9UIV1-2"/>
    <property type="protein sequence ID" value="ENSP00000429093.1"/>
    <property type="gene ID" value="ENSG00000198791.12"/>
</dbReference>
<dbReference type="GeneID" id="29883"/>
<dbReference type="KEGG" id="hsa:29883"/>
<dbReference type="MANE-Select" id="ENST00000361272.9">
    <property type="protein sequence ID" value="ENSP00000355279.4"/>
    <property type="RefSeq nucleotide sequence ID" value="NM_013354.7"/>
    <property type="RefSeq protein sequence ID" value="NP_037486.2"/>
</dbReference>
<dbReference type="UCSC" id="uc003wxg.2">
    <molecule id="Q9UIV1-1"/>
    <property type="organism name" value="human"/>
</dbReference>
<dbReference type="AGR" id="HGNC:14101"/>
<dbReference type="CTD" id="29883"/>
<dbReference type="DisGeNET" id="29883"/>
<dbReference type="GeneCards" id="CNOT7"/>
<dbReference type="HGNC" id="HGNC:14101">
    <property type="gene designation" value="CNOT7"/>
</dbReference>
<dbReference type="HPA" id="ENSG00000198791">
    <property type="expression patterns" value="Low tissue specificity"/>
</dbReference>
<dbReference type="MIM" id="604913">
    <property type="type" value="gene"/>
</dbReference>
<dbReference type="neXtProt" id="NX_Q9UIV1"/>
<dbReference type="OpenTargets" id="ENSG00000198791"/>
<dbReference type="PharmGKB" id="PA26678"/>
<dbReference type="VEuPathDB" id="HostDB:ENSG00000198791"/>
<dbReference type="eggNOG" id="KOG0304">
    <property type="taxonomic scope" value="Eukaryota"/>
</dbReference>
<dbReference type="GeneTree" id="ENSGT00390000000080"/>
<dbReference type="HOGENOM" id="CLU_027974_0_1_1"/>
<dbReference type="InParanoid" id="Q9UIV1"/>
<dbReference type="OMA" id="IKFMMRA"/>
<dbReference type="OrthoDB" id="1164111at2759"/>
<dbReference type="PAN-GO" id="Q9UIV1">
    <property type="GO annotations" value="4 GO annotations based on evolutionary models"/>
</dbReference>
<dbReference type="PhylomeDB" id="Q9UIV1"/>
<dbReference type="TreeFam" id="TF314185"/>
<dbReference type="BRENDA" id="3.1.13.4">
    <property type="organism ID" value="2681"/>
</dbReference>
<dbReference type="PathwayCommons" id="Q9UIV1"/>
<dbReference type="Reactome" id="R-HSA-429947">
    <property type="pathway name" value="Deadenylation of mRNA"/>
</dbReference>
<dbReference type="Reactome" id="R-HSA-6804115">
    <property type="pathway name" value="TP53 regulates transcription of additional cell cycle genes whose exact role in the p53 pathway remain uncertain"/>
</dbReference>
<dbReference type="Reactome" id="R-HSA-9820841">
    <property type="pathway name" value="M-decay: degradation of maternal mRNAs by maternally stored factors"/>
</dbReference>
<dbReference type="SignaLink" id="Q9UIV1"/>
<dbReference type="SIGNOR" id="Q9UIV1"/>
<dbReference type="BioGRID-ORCS" id="29883">
    <property type="hits" value="208 hits in 1165 CRISPR screens"/>
</dbReference>
<dbReference type="CD-CODE" id="232F8A39">
    <property type="entry name" value="P-body"/>
</dbReference>
<dbReference type="CD-CODE" id="DEE660B4">
    <property type="entry name" value="Stress granule"/>
</dbReference>
<dbReference type="ChiTaRS" id="CNOT7">
    <property type="organism name" value="human"/>
</dbReference>
<dbReference type="EvolutionaryTrace" id="Q9UIV1"/>
<dbReference type="GeneWiki" id="CNOT7"/>
<dbReference type="GenomeRNAi" id="29883"/>
<dbReference type="Pharos" id="Q9UIV1">
    <property type="development level" value="Tchem"/>
</dbReference>
<dbReference type="PRO" id="PR:Q9UIV1"/>
<dbReference type="Proteomes" id="UP000005640">
    <property type="component" value="Chromosome 8"/>
</dbReference>
<dbReference type="RNAct" id="Q9UIV1">
    <property type="molecule type" value="protein"/>
</dbReference>
<dbReference type="Bgee" id="ENSG00000198791">
    <property type="expression patterns" value="Expressed in oocyte and 209 other cell types or tissues"/>
</dbReference>
<dbReference type="ExpressionAtlas" id="Q9UIV1">
    <property type="expression patterns" value="baseline and differential"/>
</dbReference>
<dbReference type="GO" id="GO:0030014">
    <property type="term" value="C:CCR4-NOT complex"/>
    <property type="evidence" value="ECO:0000314"/>
    <property type="project" value="UniProtKB"/>
</dbReference>
<dbReference type="GO" id="GO:0030015">
    <property type="term" value="C:CCR4-NOT core complex"/>
    <property type="evidence" value="ECO:0000318"/>
    <property type="project" value="GO_Central"/>
</dbReference>
<dbReference type="GO" id="GO:0005737">
    <property type="term" value="C:cytoplasm"/>
    <property type="evidence" value="ECO:0000315"/>
    <property type="project" value="UniProtKB"/>
</dbReference>
<dbReference type="GO" id="GO:0005829">
    <property type="term" value="C:cytosol"/>
    <property type="evidence" value="ECO:0000304"/>
    <property type="project" value="Reactome"/>
</dbReference>
<dbReference type="GO" id="GO:0043232">
    <property type="term" value="C:intracellular membraneless organelle"/>
    <property type="evidence" value="ECO:0000314"/>
    <property type="project" value="UniProt"/>
</dbReference>
<dbReference type="GO" id="GO:0016020">
    <property type="term" value="C:membrane"/>
    <property type="evidence" value="ECO:0007005"/>
    <property type="project" value="UniProtKB"/>
</dbReference>
<dbReference type="GO" id="GO:0016604">
    <property type="term" value="C:nuclear body"/>
    <property type="evidence" value="ECO:0000314"/>
    <property type="project" value="HPA"/>
</dbReference>
<dbReference type="GO" id="GO:0016607">
    <property type="term" value="C:nuclear speck"/>
    <property type="evidence" value="ECO:0000315"/>
    <property type="project" value="UniProtKB"/>
</dbReference>
<dbReference type="GO" id="GO:0005634">
    <property type="term" value="C:nucleus"/>
    <property type="evidence" value="ECO:0000314"/>
    <property type="project" value="UniProtKB"/>
</dbReference>
<dbReference type="GO" id="GO:0000932">
    <property type="term" value="C:P-body"/>
    <property type="evidence" value="ECO:0000250"/>
    <property type="project" value="UniProtKB"/>
</dbReference>
<dbReference type="GO" id="GO:0000175">
    <property type="term" value="F:3'-5'-RNA exonuclease activity"/>
    <property type="evidence" value="ECO:0000314"/>
    <property type="project" value="UniProtKB"/>
</dbReference>
<dbReference type="GO" id="GO:0140297">
    <property type="term" value="F:DNA-binding transcription factor binding"/>
    <property type="evidence" value="ECO:0000353"/>
    <property type="project" value="UniProtKB"/>
</dbReference>
<dbReference type="GO" id="GO:0046872">
    <property type="term" value="F:metal ion binding"/>
    <property type="evidence" value="ECO:0007669"/>
    <property type="project" value="UniProtKB-KW"/>
</dbReference>
<dbReference type="GO" id="GO:0034584">
    <property type="term" value="F:piRNA binding"/>
    <property type="evidence" value="ECO:0007669"/>
    <property type="project" value="Ensembl"/>
</dbReference>
<dbReference type="GO" id="GO:0004535">
    <property type="term" value="F:poly(A)-specific ribonuclease activity"/>
    <property type="evidence" value="ECO:0000314"/>
    <property type="project" value="UniProtKB"/>
</dbReference>
<dbReference type="GO" id="GO:0004532">
    <property type="term" value="F:RNA exonuclease activity"/>
    <property type="evidence" value="ECO:0000314"/>
    <property type="project" value="UniProtKB"/>
</dbReference>
<dbReference type="GO" id="GO:0003714">
    <property type="term" value="F:transcription corepressor activity"/>
    <property type="evidence" value="ECO:0000315"/>
    <property type="project" value="UniProtKB"/>
</dbReference>
<dbReference type="GO" id="GO:0000290">
    <property type="term" value="P:deadenylation-dependent decapping of nuclear-transcribed mRNA"/>
    <property type="evidence" value="ECO:0000314"/>
    <property type="project" value="UniProtKB"/>
</dbReference>
<dbReference type="GO" id="GO:0051607">
    <property type="term" value="P:defense response to virus"/>
    <property type="evidence" value="ECO:0000315"/>
    <property type="project" value="UniProtKB"/>
</dbReference>
<dbReference type="GO" id="GO:0035279">
    <property type="term" value="P:miRNA-mediated gene silencing by mRNA destabilization"/>
    <property type="evidence" value="ECO:0000314"/>
    <property type="project" value="UniProtKB"/>
</dbReference>
<dbReference type="GO" id="GO:0008285">
    <property type="term" value="P:negative regulation of cell population proliferation"/>
    <property type="evidence" value="ECO:0000314"/>
    <property type="project" value="UniProtKB"/>
</dbReference>
<dbReference type="GO" id="GO:0045892">
    <property type="term" value="P:negative regulation of DNA-templated transcription"/>
    <property type="evidence" value="ECO:0000315"/>
    <property type="project" value="UniProtKB"/>
</dbReference>
<dbReference type="GO" id="GO:0010629">
    <property type="term" value="P:negative regulation of gene expression"/>
    <property type="evidence" value="ECO:0000315"/>
    <property type="project" value="BHF-UCL"/>
</dbReference>
<dbReference type="GO" id="GO:0060339">
    <property type="term" value="P:negative regulation of type I interferon-mediated signaling pathway"/>
    <property type="evidence" value="ECO:0000315"/>
    <property type="project" value="UniProtKB"/>
</dbReference>
<dbReference type="GO" id="GO:0000288">
    <property type="term" value="P:nuclear-transcribed mRNA catabolic process, deadenylation-dependent decay"/>
    <property type="evidence" value="ECO:0000318"/>
    <property type="project" value="GO_Central"/>
</dbReference>
<dbReference type="GO" id="GO:0000289">
    <property type="term" value="P:nuclear-transcribed mRNA poly(A) tail shortening"/>
    <property type="evidence" value="ECO:0000314"/>
    <property type="project" value="UniProtKB"/>
</dbReference>
<dbReference type="GO" id="GO:0033962">
    <property type="term" value="P:P-body assembly"/>
    <property type="evidence" value="ECO:0007669"/>
    <property type="project" value="Ensembl"/>
</dbReference>
<dbReference type="GO" id="GO:0140991">
    <property type="term" value="P:piRNA-mediated gene silencing by mRNA destabilization"/>
    <property type="evidence" value="ECO:0007669"/>
    <property type="project" value="Ensembl"/>
</dbReference>
<dbReference type="GO" id="GO:0008284">
    <property type="term" value="P:positive regulation of cell population proliferation"/>
    <property type="evidence" value="ECO:0000315"/>
    <property type="project" value="UniProtKB"/>
</dbReference>
<dbReference type="GO" id="GO:0061014">
    <property type="term" value="P:positive regulation of mRNA catabolic process"/>
    <property type="evidence" value="ECO:0000315"/>
    <property type="project" value="UniProtKB"/>
</dbReference>
<dbReference type="GO" id="GO:1900153">
    <property type="term" value="P:positive regulation of nuclear-transcribed mRNA catabolic process, deadenylation-dependent decay"/>
    <property type="evidence" value="ECO:0000315"/>
    <property type="project" value="UniProtKB"/>
</dbReference>
<dbReference type="GO" id="GO:0060213">
    <property type="term" value="P:positive regulation of nuclear-transcribed mRNA poly(A) tail shortening"/>
    <property type="evidence" value="ECO:0000315"/>
    <property type="project" value="UniProtKB"/>
</dbReference>
<dbReference type="GO" id="GO:0045944">
    <property type="term" value="P:positive regulation of transcription by RNA polymerase II"/>
    <property type="evidence" value="ECO:0007669"/>
    <property type="project" value="Ensembl"/>
</dbReference>
<dbReference type="GO" id="GO:0045070">
    <property type="term" value="P:positive regulation of viral genome replication"/>
    <property type="evidence" value="ECO:0000315"/>
    <property type="project" value="UniProtKB"/>
</dbReference>
<dbReference type="GO" id="GO:0006417">
    <property type="term" value="P:regulation of translation"/>
    <property type="evidence" value="ECO:0007669"/>
    <property type="project" value="UniProtKB-KW"/>
</dbReference>
<dbReference type="GO" id="GO:0042509">
    <property type="term" value="P:regulation of tyrosine phosphorylation of STAT protein"/>
    <property type="evidence" value="ECO:0000315"/>
    <property type="project" value="UniProtKB"/>
</dbReference>
<dbReference type="GO" id="GO:0031047">
    <property type="term" value="P:regulatory ncRNA-mediated gene silencing"/>
    <property type="evidence" value="ECO:0000250"/>
    <property type="project" value="UniProtKB"/>
</dbReference>
<dbReference type="FunFam" id="3.30.420.10:FF:000005">
    <property type="entry name" value="CCR4-NOT transcription complex subunit 7"/>
    <property type="match status" value="1"/>
</dbReference>
<dbReference type="Gene3D" id="3.30.420.10">
    <property type="entry name" value="Ribonuclease H-like superfamily/Ribonuclease H"/>
    <property type="match status" value="1"/>
</dbReference>
<dbReference type="IDEAL" id="IID00504"/>
<dbReference type="InterPro" id="IPR039637">
    <property type="entry name" value="CNOT7/CNOT8/Pop2"/>
</dbReference>
<dbReference type="InterPro" id="IPR006941">
    <property type="entry name" value="RNase_CAF1"/>
</dbReference>
<dbReference type="InterPro" id="IPR012337">
    <property type="entry name" value="RNaseH-like_sf"/>
</dbReference>
<dbReference type="InterPro" id="IPR036397">
    <property type="entry name" value="RNaseH_sf"/>
</dbReference>
<dbReference type="PANTHER" id="PTHR10797">
    <property type="entry name" value="CCR4-NOT TRANSCRIPTION COMPLEX SUBUNIT"/>
    <property type="match status" value="1"/>
</dbReference>
<dbReference type="Pfam" id="PF04857">
    <property type="entry name" value="CAF1"/>
    <property type="match status" value="2"/>
</dbReference>
<dbReference type="SUPFAM" id="SSF53098">
    <property type="entry name" value="Ribonuclease H-like"/>
    <property type="match status" value="1"/>
</dbReference>
<name>CNOT7_HUMAN</name>
<reference key="1">
    <citation type="journal article" date="1998" name="Biochem. J.">
        <title>Human carbon catabolite repressor protein (CCR4)-associative factor 1: cloning, expression and characterization of its interaction with the B-cell translocation protein BTG1.</title>
        <authorList>
            <person name="Bogdan J.A."/>
            <person name="Adams-Burton C."/>
            <person name="Pedicord D.L."/>
            <person name="Sukovich D.A."/>
            <person name="Benfield P.A."/>
            <person name="Corjay M.H."/>
            <person name="Stoltenborg J.K."/>
            <person name="Dicker I.B."/>
        </authorList>
    </citation>
    <scope>NUCLEOTIDE SEQUENCE [MRNA] (ISOFORM 1)</scope>
    <scope>SUBCELLULAR LOCATION</scope>
</reference>
<reference key="2">
    <citation type="submission" date="2003-07" db="EMBL/GenBank/DDBJ databases">
        <title>Cloning and expression of a new human cDNA homology to mouse mCAF1 protein mRNA.</title>
        <authorList>
            <person name="Wan Y.Z."/>
            <person name="Yu L."/>
            <person name="Zhang H.L."/>
            <person name="Liu Q."/>
            <person name="Chen S.Y."/>
            <person name="Zhao S.Y."/>
        </authorList>
    </citation>
    <scope>NUCLEOTIDE SEQUENCE [MRNA] (ISOFORM 1)</scope>
</reference>
<reference key="3">
    <citation type="journal article" date="2004" name="Nat. Genet.">
        <title>Complete sequencing and characterization of 21,243 full-length human cDNAs.</title>
        <authorList>
            <person name="Ota T."/>
            <person name="Suzuki Y."/>
            <person name="Nishikawa T."/>
            <person name="Otsuki T."/>
            <person name="Sugiyama T."/>
            <person name="Irie R."/>
            <person name="Wakamatsu A."/>
            <person name="Hayashi K."/>
            <person name="Sato H."/>
            <person name="Nagai K."/>
            <person name="Kimura K."/>
            <person name="Makita H."/>
            <person name="Sekine M."/>
            <person name="Obayashi M."/>
            <person name="Nishi T."/>
            <person name="Shibahara T."/>
            <person name="Tanaka T."/>
            <person name="Ishii S."/>
            <person name="Yamamoto J."/>
            <person name="Saito K."/>
            <person name="Kawai Y."/>
            <person name="Isono Y."/>
            <person name="Nakamura Y."/>
            <person name="Nagahari K."/>
            <person name="Murakami K."/>
            <person name="Yasuda T."/>
            <person name="Iwayanagi T."/>
            <person name="Wagatsuma M."/>
            <person name="Shiratori A."/>
            <person name="Sudo H."/>
            <person name="Hosoiri T."/>
            <person name="Kaku Y."/>
            <person name="Kodaira H."/>
            <person name="Kondo H."/>
            <person name="Sugawara M."/>
            <person name="Takahashi M."/>
            <person name="Kanda K."/>
            <person name="Yokoi T."/>
            <person name="Furuya T."/>
            <person name="Kikkawa E."/>
            <person name="Omura Y."/>
            <person name="Abe K."/>
            <person name="Kamihara K."/>
            <person name="Katsuta N."/>
            <person name="Sato K."/>
            <person name="Tanikawa M."/>
            <person name="Yamazaki M."/>
            <person name="Ninomiya K."/>
            <person name="Ishibashi T."/>
            <person name="Yamashita H."/>
            <person name="Murakawa K."/>
            <person name="Fujimori K."/>
            <person name="Tanai H."/>
            <person name="Kimata M."/>
            <person name="Watanabe M."/>
            <person name="Hiraoka S."/>
            <person name="Chiba Y."/>
            <person name="Ishida S."/>
            <person name="Ono Y."/>
            <person name="Takiguchi S."/>
            <person name="Watanabe S."/>
            <person name="Yosida M."/>
            <person name="Hotuta T."/>
            <person name="Kusano J."/>
            <person name="Kanehori K."/>
            <person name="Takahashi-Fujii A."/>
            <person name="Hara H."/>
            <person name="Tanase T.-O."/>
            <person name="Nomura Y."/>
            <person name="Togiya S."/>
            <person name="Komai F."/>
            <person name="Hara R."/>
            <person name="Takeuchi K."/>
            <person name="Arita M."/>
            <person name="Imose N."/>
            <person name="Musashino K."/>
            <person name="Yuuki H."/>
            <person name="Oshima A."/>
            <person name="Sasaki N."/>
            <person name="Aotsuka S."/>
            <person name="Yoshikawa Y."/>
            <person name="Matsunawa H."/>
            <person name="Ichihara T."/>
            <person name="Shiohata N."/>
            <person name="Sano S."/>
            <person name="Moriya S."/>
            <person name="Momiyama H."/>
            <person name="Satoh N."/>
            <person name="Takami S."/>
            <person name="Terashima Y."/>
            <person name="Suzuki O."/>
            <person name="Nakagawa S."/>
            <person name="Senoh A."/>
            <person name="Mizoguchi H."/>
            <person name="Goto Y."/>
            <person name="Shimizu F."/>
            <person name="Wakebe H."/>
            <person name="Hishigaki H."/>
            <person name="Watanabe T."/>
            <person name="Sugiyama A."/>
            <person name="Takemoto M."/>
            <person name="Kawakami B."/>
            <person name="Yamazaki M."/>
            <person name="Watanabe K."/>
            <person name="Kumagai A."/>
            <person name="Itakura S."/>
            <person name="Fukuzumi Y."/>
            <person name="Fujimori Y."/>
            <person name="Komiyama M."/>
            <person name="Tashiro H."/>
            <person name="Tanigami A."/>
            <person name="Fujiwara T."/>
            <person name="Ono T."/>
            <person name="Yamada K."/>
            <person name="Fujii Y."/>
            <person name="Ozaki K."/>
            <person name="Hirao M."/>
            <person name="Ohmori Y."/>
            <person name="Kawabata A."/>
            <person name="Hikiji T."/>
            <person name="Kobatake N."/>
            <person name="Inagaki H."/>
            <person name="Ikema Y."/>
            <person name="Okamoto S."/>
            <person name="Okitani R."/>
            <person name="Kawakami T."/>
            <person name="Noguchi S."/>
            <person name="Itoh T."/>
            <person name="Shigeta K."/>
            <person name="Senba T."/>
            <person name="Matsumura K."/>
            <person name="Nakajima Y."/>
            <person name="Mizuno T."/>
            <person name="Morinaga M."/>
            <person name="Sasaki M."/>
            <person name="Togashi T."/>
            <person name="Oyama M."/>
            <person name="Hata H."/>
            <person name="Watanabe M."/>
            <person name="Komatsu T."/>
            <person name="Mizushima-Sugano J."/>
            <person name="Satoh T."/>
            <person name="Shirai Y."/>
            <person name="Takahashi Y."/>
            <person name="Nakagawa K."/>
            <person name="Okumura K."/>
            <person name="Nagase T."/>
            <person name="Nomura N."/>
            <person name="Kikuchi H."/>
            <person name="Masuho Y."/>
            <person name="Yamashita R."/>
            <person name="Nakai K."/>
            <person name="Yada T."/>
            <person name="Nakamura Y."/>
            <person name="Ohara O."/>
            <person name="Isogai T."/>
            <person name="Sugano S."/>
        </authorList>
    </citation>
    <scope>NUCLEOTIDE SEQUENCE [LARGE SCALE MRNA] (ISOFORMS 1 AND 2)</scope>
    <source>
        <tissue>Embryo</tissue>
        <tissue>Placenta</tissue>
    </source>
</reference>
<reference key="4">
    <citation type="journal article" date="2006" name="Nature">
        <title>DNA sequence and analysis of human chromosome 8.</title>
        <authorList>
            <person name="Nusbaum C."/>
            <person name="Mikkelsen T.S."/>
            <person name="Zody M.C."/>
            <person name="Asakawa S."/>
            <person name="Taudien S."/>
            <person name="Garber M."/>
            <person name="Kodira C.D."/>
            <person name="Schueler M.G."/>
            <person name="Shimizu A."/>
            <person name="Whittaker C.A."/>
            <person name="Chang J.L."/>
            <person name="Cuomo C.A."/>
            <person name="Dewar K."/>
            <person name="FitzGerald M.G."/>
            <person name="Yang X."/>
            <person name="Allen N.R."/>
            <person name="Anderson S."/>
            <person name="Asakawa T."/>
            <person name="Blechschmidt K."/>
            <person name="Bloom T."/>
            <person name="Borowsky M.L."/>
            <person name="Butler J."/>
            <person name="Cook A."/>
            <person name="Corum B."/>
            <person name="DeArellano K."/>
            <person name="DeCaprio D."/>
            <person name="Dooley K.T."/>
            <person name="Dorris L. III"/>
            <person name="Engels R."/>
            <person name="Gloeckner G."/>
            <person name="Hafez N."/>
            <person name="Hagopian D.S."/>
            <person name="Hall J.L."/>
            <person name="Ishikawa S.K."/>
            <person name="Jaffe D.B."/>
            <person name="Kamat A."/>
            <person name="Kudoh J."/>
            <person name="Lehmann R."/>
            <person name="Lokitsang T."/>
            <person name="Macdonald P."/>
            <person name="Major J.E."/>
            <person name="Matthews C.D."/>
            <person name="Mauceli E."/>
            <person name="Menzel U."/>
            <person name="Mihalev A.H."/>
            <person name="Minoshima S."/>
            <person name="Murayama Y."/>
            <person name="Naylor J.W."/>
            <person name="Nicol R."/>
            <person name="Nguyen C."/>
            <person name="O'Leary S.B."/>
            <person name="O'Neill K."/>
            <person name="Parker S.C.J."/>
            <person name="Polley A."/>
            <person name="Raymond C.K."/>
            <person name="Reichwald K."/>
            <person name="Rodriguez J."/>
            <person name="Sasaki T."/>
            <person name="Schilhabel M."/>
            <person name="Siddiqui R."/>
            <person name="Smith C.L."/>
            <person name="Sneddon T.P."/>
            <person name="Talamas J.A."/>
            <person name="Tenzin P."/>
            <person name="Topham K."/>
            <person name="Venkataraman V."/>
            <person name="Wen G."/>
            <person name="Yamazaki S."/>
            <person name="Young S.K."/>
            <person name="Zeng Q."/>
            <person name="Zimmer A.R."/>
            <person name="Rosenthal A."/>
            <person name="Birren B.W."/>
            <person name="Platzer M."/>
            <person name="Shimizu N."/>
            <person name="Lander E.S."/>
        </authorList>
    </citation>
    <scope>NUCLEOTIDE SEQUENCE [LARGE SCALE GENOMIC DNA]</scope>
</reference>
<reference key="5">
    <citation type="submission" date="2005-09" db="EMBL/GenBank/DDBJ databases">
        <authorList>
            <person name="Mural R.J."/>
            <person name="Istrail S."/>
            <person name="Sutton G.G."/>
            <person name="Florea L."/>
            <person name="Halpern A.L."/>
            <person name="Mobarry C.M."/>
            <person name="Lippert R."/>
            <person name="Walenz B."/>
            <person name="Shatkay H."/>
            <person name="Dew I."/>
            <person name="Miller J.R."/>
            <person name="Flanigan M.J."/>
            <person name="Edwards N.J."/>
            <person name="Bolanos R."/>
            <person name="Fasulo D."/>
            <person name="Halldorsson B.V."/>
            <person name="Hannenhalli S."/>
            <person name="Turner R."/>
            <person name="Yooseph S."/>
            <person name="Lu F."/>
            <person name="Nusskern D.R."/>
            <person name="Shue B.C."/>
            <person name="Zheng X.H."/>
            <person name="Zhong F."/>
            <person name="Delcher A.L."/>
            <person name="Huson D.H."/>
            <person name="Kravitz S.A."/>
            <person name="Mouchard L."/>
            <person name="Reinert K."/>
            <person name="Remington K.A."/>
            <person name="Clark A.G."/>
            <person name="Waterman M.S."/>
            <person name="Eichler E.E."/>
            <person name="Adams M.D."/>
            <person name="Hunkapiller M.W."/>
            <person name="Myers E.W."/>
            <person name="Venter J.C."/>
        </authorList>
    </citation>
    <scope>NUCLEOTIDE SEQUENCE [LARGE SCALE GENOMIC DNA]</scope>
</reference>
<reference key="6">
    <citation type="journal article" date="2004" name="Genome Res.">
        <title>The status, quality, and expansion of the NIH full-length cDNA project: the Mammalian Gene Collection (MGC).</title>
        <authorList>
            <consortium name="The MGC Project Team"/>
        </authorList>
    </citation>
    <scope>NUCLEOTIDE SEQUENCE [LARGE SCALE MRNA] (ISOFORM 1)</scope>
    <source>
        <tissue>Prostate</tissue>
        <tissue>Testis</tissue>
    </source>
</reference>
<reference key="7">
    <citation type="journal article" date="2005" name="RNA">
        <title>Conservation of the deadenylase activity of proteins of the Caf1 family in human.</title>
        <authorList>
            <person name="Bianchin C."/>
            <person name="Mauxion F."/>
            <person name="Sentis S."/>
            <person name="Seraphin B."/>
            <person name="Corbo L."/>
        </authorList>
    </citation>
    <scope>CATALYTIC ACTIVITY</scope>
</reference>
<reference key="8">
    <citation type="journal article" date="2009" name="Biochem. J.">
        <title>Human Ccr4-Not complexes contain variable deadenylase subunits.</title>
        <authorList>
            <person name="Lau N.C."/>
            <person name="Kolkman A."/>
            <person name="van Schaik F.M."/>
            <person name="Mulder K.W."/>
            <person name="Pijnappel W.W."/>
            <person name="Heck A.J."/>
            <person name="Timmers H.T."/>
        </authorList>
    </citation>
    <scope>IDENTIFICATION IN THE CCR4-NOT COMPLEX</scope>
    <scope>COMPOSITION OF THE CCR4-NOT COMPLEX</scope>
</reference>
<reference key="9">
    <citation type="journal article" date="2009" name="Mol. Biol. Cell">
        <title>The Ccr4-NOT deadenylase subunits CNOT7 and CNOT8 have overlapping roles and modulate cell proliferation.</title>
        <authorList>
            <person name="Aslam A."/>
            <person name="Mittal S."/>
            <person name="Koch F."/>
            <person name="Andrau J.C."/>
            <person name="Winkler G.S."/>
        </authorList>
    </citation>
    <scope>FUNCTION</scope>
</reference>
<reference key="10">
    <citation type="journal article" date="2010" name="J. Biol. Chem.">
        <title>Translational repression by deadenylases.</title>
        <authorList>
            <person name="Cooke A."/>
            <person name="Prigge A."/>
            <person name="Wickens M."/>
        </authorList>
    </citation>
    <scope>FUNCTION</scope>
    <scope>CATALYTIC ACTIVITY</scope>
</reference>
<reference key="11">
    <citation type="journal article" date="2010" name="Mol. Cell. Biol.">
        <title>CCR4-NOT deadenylates mRNA associated with complexes in human cells.</title>
        <authorList>
            <person name="Piao X."/>
            <person name="Zhang X."/>
            <person name="Wu L."/>
            <person name="Belasco J.G."/>
        </authorList>
    </citation>
    <scope>FUNCTION</scope>
</reference>
<reference key="12">
    <citation type="journal article" date="2011" name="BMC Syst. Biol.">
        <title>Initial characterization of the human central proteome.</title>
        <authorList>
            <person name="Burkard T.R."/>
            <person name="Planyavsky M."/>
            <person name="Kaupe I."/>
            <person name="Breitwieser F.P."/>
            <person name="Buerckstuemmer T."/>
            <person name="Bennett K.L."/>
            <person name="Superti-Furga G."/>
            <person name="Colinge J."/>
        </authorList>
    </citation>
    <scope>IDENTIFICATION BY MASS SPECTROMETRY [LARGE SCALE ANALYSIS]</scope>
</reference>
<reference key="13">
    <citation type="journal article" date="2011" name="EMBO J.">
        <title>Anti-proliferative protein Tob negatively regulates CPEB3 target by recruiting Caf1 deadenylase.</title>
        <authorList>
            <person name="Hosoda N."/>
            <person name="Funakoshi Y."/>
            <person name="Hirasawa M."/>
            <person name="Yamagishi R."/>
            <person name="Asano Y."/>
            <person name="Miyagawa R."/>
            <person name="Ogami K."/>
            <person name="Tsujimoto M."/>
            <person name="Hoshino S."/>
        </authorList>
    </citation>
    <scope>INTERACTION WITH TOB1</scope>
    <scope>MUTAGENESIS OF ASP-161</scope>
</reference>
<reference key="14">
    <citation type="journal article" date="2012" name="PLoS ONE">
        <title>The anti-proliferative activity of BTG/TOB proteins is mediated via the Caf1a (CNOT7) and Caf1b (CNOT8) deadenylase subunits of the Ccr4-not complex.</title>
        <authorList>
            <person name="Doidge R."/>
            <person name="Mittal S."/>
            <person name="Aslam A."/>
            <person name="Winkler G.S."/>
        </authorList>
    </citation>
    <scope>FUNCTION</scope>
    <scope>INTERACTION WITH TOB1 AND BTG2</scope>
</reference>
<reference key="15">
    <citation type="journal article" date="2014" name="Nucleic Acids Res.">
        <title>ZFP36L1 and ZFP36L2 control LDLR mRNA stability via the ERK-RSK pathway.</title>
        <authorList>
            <person name="Adachi S."/>
            <person name="Homoto M."/>
            <person name="Tanaka R."/>
            <person name="Hioki Y."/>
            <person name="Murakami H."/>
            <person name="Suga H."/>
            <person name="Matsumoto M."/>
            <person name="Nakayama K.I."/>
            <person name="Hatta T."/>
            <person name="Iemura S."/>
            <person name="Natsume T."/>
        </authorList>
    </citation>
    <scope>INTERACTION WITH ZFP36; ZFP36L1 AND ZFP36L2</scope>
</reference>
<reference key="16">
    <citation type="journal article" date="2015" name="Proteomics">
        <title>N-terminome analysis of the human mitochondrial proteome.</title>
        <authorList>
            <person name="Vaca Jacome A.S."/>
            <person name="Rabilloud T."/>
            <person name="Schaeffer-Reiss C."/>
            <person name="Rompais M."/>
            <person name="Ayoub D."/>
            <person name="Lane L."/>
            <person name="Bairoch A."/>
            <person name="Van Dorsselaer A."/>
            <person name="Carapito C."/>
        </authorList>
    </citation>
    <scope>IDENTIFICATION BY MASS SPECTROMETRY [LARGE SCALE ANALYSIS]</scope>
</reference>
<reference key="17">
    <citation type="journal article" date="2019" name="FEBS Lett.">
        <title>TDP-43 accelerates deadenylation of target mRNAs by recruiting Caf1 deadenylase.</title>
        <authorList>
            <person name="Fukushima M."/>
            <person name="Hosoda N."/>
            <person name="Chifu K."/>
            <person name="Hoshino S.I."/>
        </authorList>
    </citation>
    <scope>INTERACTION WITH TARDBP</scope>
</reference>
<reference key="18">
    <citation type="journal article" date="2019" name="Science">
        <title>Phospho-dependent phase separation of FMRP and CAPRIN1 recapitulates regulation of translation and deadenylation.</title>
        <authorList>
            <person name="Kim T.H."/>
            <person name="Tsang B."/>
            <person name="Vernon R.M."/>
            <person name="Sonenberg N."/>
            <person name="Kay L.E."/>
            <person name="Forman-Kay J.D."/>
        </authorList>
    </citation>
    <scope>FUNCTION</scope>
    <scope>SUBCELLULAR LOCATION</scope>
</reference>
<reference key="19">
    <citation type="journal article" date="2020" name="Am. J. Hum. Genet.">
        <title>Homozygous mutations in BTG4 cause zygotic cleavage failure and female infertility.</title>
        <authorList>
            <person name="Zheng W."/>
            <person name="Zhou Z."/>
            <person name="Sha Q."/>
            <person name="Niu X."/>
            <person name="Sun X."/>
            <person name="Shi J."/>
            <person name="Zhao L."/>
            <person name="Zhang S."/>
            <person name="Dai J."/>
            <person name="Cai S."/>
            <person name="Meng F."/>
            <person name="Hu L."/>
            <person name="Gong F."/>
            <person name="Li X."/>
            <person name="Fu J."/>
            <person name="Shi R."/>
            <person name="Lu G."/>
            <person name="Chen B."/>
            <person name="Fan H."/>
            <person name="Wang L."/>
            <person name="Lin G."/>
            <person name="Sang Q."/>
        </authorList>
    </citation>
    <scope>INTERACTION WITH BTG4</scope>
</reference>
<reference key="20">
    <citation type="journal article" date="2009" name="J. Biol. Chem.">
        <title>Structural basis for the antiproliferative activity of the Tob-hCaf1 complex.</title>
        <authorList>
            <person name="Horiuchi M."/>
            <person name="Takeuchi K."/>
            <person name="Noda N."/>
            <person name="Muroya N."/>
            <person name="Suzuki T."/>
            <person name="Nakamura T."/>
            <person name="Kawamura-Tsuzuku J."/>
            <person name="Takahasi K."/>
            <person name="Yamamoto T."/>
            <person name="Inagaki F."/>
        </authorList>
    </citation>
    <scope>X-RAY CRYSTALLOGRAPHY (2.5 ANGSTROMS) OF 11-262 IN COMPLEX WITH TOB1</scope>
    <scope>FUNCTION</scope>
    <scope>CATALYTIC ACTIVITY</scope>
    <scope>COFACTOR</scope>
    <scope>MUTAGENESIS OF ASP-40; GLU-42; ASP-161; HIS-225 AND ASP-230</scope>
</reference>
<reference key="21">
    <citation type="journal article" date="2012" name="Nucleic Acids Res.">
        <title>The structural basis for the interaction between the CAF1 nuclease and the NOT1 scaffold of the human CCR4-NOT deadenylase complex.</title>
        <authorList>
            <person name="Petit A.P."/>
            <person name="Wohlbold L."/>
            <person name="Bawankar P."/>
            <person name="Huntzinger E."/>
            <person name="Schmidt S."/>
            <person name="Izaurralde E."/>
            <person name="Weichenrieder O."/>
        </authorList>
    </citation>
    <scope>X-RAY CRYSTALLOGRAPHY (2.7 ANGSTROMS) OF 1-285 IN COMPLEX WITH CNOT1</scope>
    <scope>MUTAGENESIS OF GLU-138; MET-141; THR-142 AND GLU-149</scope>
</reference>
<organism>
    <name type="scientific">Homo sapiens</name>
    <name type="common">Human</name>
    <dbReference type="NCBI Taxonomy" id="9606"/>
    <lineage>
        <taxon>Eukaryota</taxon>
        <taxon>Metazoa</taxon>
        <taxon>Chordata</taxon>
        <taxon>Craniata</taxon>
        <taxon>Vertebrata</taxon>
        <taxon>Euteleostomi</taxon>
        <taxon>Mammalia</taxon>
        <taxon>Eutheria</taxon>
        <taxon>Euarchontoglires</taxon>
        <taxon>Primates</taxon>
        <taxon>Haplorrhini</taxon>
        <taxon>Catarrhini</taxon>
        <taxon>Hominidae</taxon>
        <taxon>Homo</taxon>
    </lineage>
</organism>
<proteinExistence type="evidence at protein level"/>
<sequence>MPAATVDHSQRICEVWACNLDEEMKKIRQVIRKYNYVAMDTEFPGVVARPIGEFRSNADYQYQLLRCNVDLLKIIQLGLTFMNEQGEYPPGTSTWQFNFKFNLTEDMYAQDSIELLTTSGIQFKKHEEEGIETQYFAELLMTSGVVLCEGVKWLSFHSGYDFGYLIKILTNSNLPEEELDFFEILRLFFPVIYDVKYLMKSCKNLKGGLQEVAEQLELERIGPQHQAGSDSLLTGMAFFKMREMFFEDHIDDAKYCGHLYGLGSGSSYVQNGTGNAYEEEANKQS</sequence>
<feature type="chain" id="PRO_0000212844" description="CCR4-NOT transcription complex subunit 7">
    <location>
        <begin position="1"/>
        <end position="285"/>
    </location>
</feature>
<feature type="binding site" evidence="17">
    <location>
        <position position="40"/>
    </location>
    <ligand>
        <name>a divalent metal cation</name>
        <dbReference type="ChEBI" id="CHEBI:60240"/>
        <label>1</label>
        <note>catalytic</note>
    </ligand>
</feature>
<feature type="binding site" evidence="17">
    <location>
        <position position="40"/>
    </location>
    <ligand>
        <name>a divalent metal cation</name>
        <dbReference type="ChEBI" id="CHEBI:60240"/>
        <label>2</label>
        <note>catalytic</note>
    </ligand>
</feature>
<feature type="binding site" evidence="17">
    <location>
        <position position="42"/>
    </location>
    <ligand>
        <name>a divalent metal cation</name>
        <dbReference type="ChEBI" id="CHEBI:60240"/>
        <label>2</label>
        <note>catalytic</note>
    </ligand>
</feature>
<feature type="binding site" evidence="17">
    <location>
        <position position="161"/>
    </location>
    <ligand>
        <name>a divalent metal cation</name>
        <dbReference type="ChEBI" id="CHEBI:60240"/>
        <label>1</label>
        <note>catalytic</note>
    </ligand>
</feature>
<feature type="binding site" evidence="17">
    <location>
        <position position="230"/>
    </location>
    <ligand>
        <name>a divalent metal cation</name>
        <dbReference type="ChEBI" id="CHEBI:60240"/>
        <label>2</label>
        <note>catalytic</note>
    </ligand>
</feature>
<feature type="binding site" evidence="17">
    <location>
        <position position="278"/>
    </location>
    <ligand>
        <name>a divalent metal cation</name>
        <dbReference type="ChEBI" id="CHEBI:60240"/>
        <label>1</label>
        <note>catalytic</note>
    </ligand>
</feature>
<feature type="splice variant" id="VSP_045497" description="In isoform 2." evidence="16">
    <original>MFFEDHIDDAKYCGHLYGLGSGSSYVQNGTGNAYEEEANKQS</original>
    <variation>V</variation>
    <location>
        <begin position="244"/>
        <end position="285"/>
    </location>
</feature>
<feature type="mutagenesis site" description="Abolishes RNA deadenylase activity." evidence="3">
    <original>D</original>
    <variation>N</variation>
    <location>
        <position position="40"/>
    </location>
</feature>
<feature type="mutagenesis site" description="Abolishes RNA deadenylase activity." evidence="3">
    <original>E</original>
    <variation>Q</variation>
    <location>
        <position position="42"/>
    </location>
</feature>
<feature type="mutagenesis site" description="Abolishes interaction with CNOT1; when associated with Y-142 and K-149." evidence="9">
    <original>E</original>
    <variation>K</variation>
    <location>
        <position position="138"/>
    </location>
</feature>
<feature type="mutagenesis site" description="Abolishes interaction with CNOT1." evidence="9">
    <original>M</original>
    <variation>R</variation>
    <location>
        <position position="141"/>
    </location>
</feature>
<feature type="mutagenesis site" description="Abolishes interaction with CNOT1; when associated with K-138 and K-149." evidence="9">
    <original>T</original>
    <variation>Y</variation>
    <location>
        <position position="142"/>
    </location>
</feature>
<feature type="mutagenesis site" description="Abolishes interaction with CNOT1; when associated with K-138 and Y-142." evidence="9">
    <original>E</original>
    <variation>K</variation>
    <location>
        <position position="149"/>
    </location>
</feature>
<feature type="mutagenesis site" description="Abolishes RNA deadenylase activity. Drastically reduces the rate of deadenylation and decay of CBEP3-tethered mRNA." evidence="3 8">
    <original>D</original>
    <variation>N</variation>
    <location>
        <position position="161"/>
    </location>
</feature>
<feature type="mutagenesis site" description="Abolishes interaction with TOB1.">
    <original>K</original>
    <variation>A</variation>
    <location>
        <position position="203"/>
    </location>
</feature>
<feature type="mutagenesis site" description="Abolishes RNA deadenylase activity." evidence="3">
    <original>H</original>
    <variation>A</variation>
    <location>
        <position position="225"/>
    </location>
</feature>
<feature type="mutagenesis site" description="Abolishes RNA deadenylase activity." evidence="3">
    <original>D</original>
    <variation>N</variation>
    <location>
        <position position="230"/>
    </location>
</feature>
<feature type="sequence conflict" description="In Ref. 3; AAP97145." evidence="17" ref="3">
    <original>AT</original>
    <variation>EL</variation>
    <location>
        <begin position="4"/>
        <end position="5"/>
    </location>
</feature>
<feature type="sequence conflict" description="In Ref. 4; BAG51197." evidence="17" ref="4">
    <original>M</original>
    <variation>V</variation>
    <location>
        <position position="241"/>
    </location>
</feature>
<feature type="strand" evidence="18">
    <location>
        <begin position="12"/>
        <end position="15"/>
    </location>
</feature>
<feature type="helix" evidence="18">
    <location>
        <begin position="17"/>
        <end position="19"/>
    </location>
</feature>
<feature type="helix" evidence="18">
    <location>
        <begin position="20"/>
        <end position="33"/>
    </location>
</feature>
<feature type="strand" evidence="18">
    <location>
        <begin position="36"/>
        <end position="42"/>
    </location>
</feature>
<feature type="strand" evidence="19">
    <location>
        <begin position="48"/>
        <end position="55"/>
    </location>
</feature>
<feature type="helix" evidence="18">
    <location>
        <begin position="57"/>
        <end position="69"/>
    </location>
</feature>
<feature type="strand" evidence="18">
    <location>
        <begin position="76"/>
        <end position="82"/>
    </location>
</feature>
<feature type="strand" evidence="18">
    <location>
        <begin position="94"/>
        <end position="99"/>
    </location>
</feature>
<feature type="turn" evidence="18">
    <location>
        <begin position="103"/>
        <end position="105"/>
    </location>
</feature>
<feature type="helix" evidence="18">
    <location>
        <begin position="110"/>
        <end position="119"/>
    </location>
</feature>
<feature type="helix" evidence="18">
    <location>
        <begin position="123"/>
        <end position="129"/>
    </location>
</feature>
<feature type="helix" evidence="18">
    <location>
        <begin position="133"/>
        <end position="141"/>
    </location>
</feature>
<feature type="turn" evidence="18">
    <location>
        <begin position="142"/>
        <end position="144"/>
    </location>
</feature>
<feature type="strand" evidence="18">
    <location>
        <begin position="145"/>
        <end position="150"/>
    </location>
</feature>
<feature type="strand" evidence="18">
    <location>
        <begin position="152"/>
        <end position="157"/>
    </location>
</feature>
<feature type="helix" evidence="18">
    <location>
        <begin position="159"/>
        <end position="170"/>
    </location>
</feature>
<feature type="helix" evidence="18">
    <location>
        <begin position="178"/>
        <end position="188"/>
    </location>
</feature>
<feature type="strand" evidence="18">
    <location>
        <begin position="192"/>
        <end position="194"/>
    </location>
</feature>
<feature type="helix" evidence="18">
    <location>
        <begin position="195"/>
        <end position="198"/>
    </location>
</feature>
<feature type="helix" evidence="18">
    <location>
        <begin position="199"/>
        <end position="201"/>
    </location>
</feature>
<feature type="strand" evidence="19">
    <location>
        <begin position="202"/>
        <end position="204"/>
    </location>
</feature>
<feature type="helix" evidence="18">
    <location>
        <begin position="209"/>
        <end position="216"/>
    </location>
</feature>
<feature type="helix" evidence="18">
    <location>
        <begin position="227"/>
        <end position="244"/>
    </location>
</feature>
<feature type="helix" evidence="18">
    <location>
        <begin position="252"/>
        <end position="255"/>
    </location>
</feature>
<comment type="function">
    <text evidence="3 5 6 7 10 13">Has 3'-5' poly(A) exoribonuclease activity for synthetic poly(A) RNA substrate (PubMed:19276069, PubMed:20634287, PubMed:31439799). Its function seems to be partially redundant with that of CNOT8 (PubMed:19605561). Catalytic component of the CCR4-NOT complex which is one of the major cellular mRNA deadenylases and is linked to various cellular processes including bulk mRNA degradation, miRNA-mediated repression, translational repression during translational initiation and general transcription regulation (PubMed:19276069, PubMed:20634287, PubMed:31439799). During miRNA-mediated repression the complex also seems to act as translational repressor during translational initiation (PubMed:20065043). Additional complex functions may be a consequence of its influence on mRNA expression (PubMed:19276069, PubMed:23236473). Associates with members of the BTG family such as TOB1 and BTG2 and is required for their anti-proliferative activity (PubMed:19276069, PubMed:23236473).</text>
</comment>
<comment type="catalytic activity">
    <reaction evidence="2 3 7">
        <text>Exonucleolytic cleavage of poly(A) to 5'-AMP.</text>
        <dbReference type="EC" id="3.1.13.4"/>
    </reaction>
</comment>
<comment type="cofactor">
    <cofactor evidence="3">
        <name>Mn(2+)</name>
        <dbReference type="ChEBI" id="CHEBI:29035"/>
    </cofactor>
    <cofactor evidence="3">
        <name>Mg(2+)</name>
        <dbReference type="ChEBI" id="CHEBI:18420"/>
    </cofactor>
    <cofactor evidence="3">
        <name>Co(2+)</name>
        <dbReference type="ChEBI" id="CHEBI:48828"/>
    </cofactor>
    <text evidence="3">Binds 2 divalent metal cations per subunit with RNAase activity being higher in presence of Mn(2+) than of Mg(2+) or Co(2+).</text>
</comment>
<comment type="subunit">
    <text evidence="1 3 4 8 9 10 11 12 14">Component of the CCR4-NOT complex; distinct complexes seem to exist that differ in the participation of probably mutually exclusive catalytic subunits; the complex contains two deadenylase subunits, CNOT6 or CNOT6L, and CNOT7 or CNOT8 (PubMed:19558367). In the complex, interacts directly with CNOT1 (PubMed:21336257). Interacts with AGO2 (By similarity). Interacts with TOB1; recruited by TOB1 to a ternary complex with CPEB3 which is required for mRNA deadenylation and decay (PubMed:19276069, PubMed:21336257, PubMed:23236473). Interacts with BTG1 (By similarity). Interacts with BTG2 (PubMed:23236473). Interacts with NANOS2 (By similarity). Interacts with ZFP36, ZFP36L1 and ZFP36L2; these interactions are inhibited in response to phorbol 12-myristate 13-acetate (PMA) treatment in a p38 MAPK-dependent manner (PubMed:25106868). Interacts with TARDBP (PubMed:30520513). Interacts with BTG4 (PubMed:32502391). Interacts with EIF4E; this interaction is increased by CNOT7 interaction with BTG4 (By similarity).</text>
</comment>
<comment type="interaction">
    <interactant intactId="EBI-2105113">
        <id>Q9UIV1</id>
    </interactant>
    <interactant intactId="EBI-528269">
        <id>Q9UKV8</id>
        <label>AGO2</label>
    </interactant>
    <organismsDiffer>false</organismsDiffer>
    <experiments>2</experiments>
</comment>
<comment type="interaction">
    <interactant intactId="EBI-2105113">
        <id>Q9UIV1</id>
    </interactant>
    <interactant intactId="EBI-742279">
        <id>P62324</id>
        <label>BTG1</label>
    </interactant>
    <organismsDiffer>false</organismsDiffer>
    <experiments>4</experiments>
</comment>
<comment type="interaction">
    <interactant intactId="EBI-2105113">
        <id>Q9UIV1</id>
    </interactant>
    <interactant intactId="EBI-1047576">
        <id>P78543</id>
        <label>BTG2</label>
    </interactant>
    <organismsDiffer>false</organismsDiffer>
    <experiments>8</experiments>
</comment>
<comment type="interaction">
    <interactant intactId="EBI-2105113">
        <id>Q9UIV1</id>
    </interactant>
    <interactant intactId="EBI-1222758">
        <id>A5YKK6</id>
        <label>CNOT1</label>
    </interactant>
    <organismsDiffer>false</organismsDiffer>
    <experiments>8</experiments>
</comment>
<comment type="interaction">
    <interactant intactId="EBI-2105113">
        <id>Q9UIV1</id>
    </interactant>
    <interactant intactId="EBI-2104530">
        <id>Q9ULM6</id>
        <label>CNOT6</label>
    </interactant>
    <organismsDiffer>false</organismsDiffer>
    <experiments>4</experiments>
</comment>
<comment type="interaction">
    <interactant intactId="EBI-2105113">
        <id>Q9UIV1</id>
    </interactant>
    <interactant intactId="EBI-1046635">
        <id>Q96LI5</id>
        <label>CNOT6L</label>
    </interactant>
    <organismsDiffer>false</organismsDiffer>
    <experiments>9</experiments>
</comment>
<comment type="interaction">
    <interactant intactId="EBI-2105113">
        <id>Q9UIV1</id>
    </interactant>
    <interactant intactId="EBI-466029">
        <id>P42858</id>
        <label>HTT</label>
    </interactant>
    <organismsDiffer>false</organismsDiffer>
    <experiments>13</experiments>
</comment>
<comment type="interaction">
    <interactant intactId="EBI-2105113">
        <id>Q9UIV1</id>
    </interactant>
    <interactant intactId="EBI-2562092">
        <id>Q86TB9</id>
        <label>PATL1</label>
    </interactant>
    <organismsDiffer>false</organismsDiffer>
    <experiments>5</experiments>
</comment>
<comment type="interaction">
    <interactant intactId="EBI-2105113">
        <id>Q9UIV1</id>
    </interactant>
    <interactant intactId="EBI-2555179">
        <id>Q9NUJ3</id>
        <label>TCP11L1</label>
    </interactant>
    <organismsDiffer>false</organismsDiffer>
    <experiments>3</experiments>
</comment>
<comment type="interaction">
    <interactant intactId="EBI-2105113">
        <id>Q9UIV1</id>
    </interactant>
    <interactant intactId="EBI-6507625">
        <id>Q9HCJ0</id>
        <label>TNRC6C</label>
    </interactant>
    <organismsDiffer>false</organismsDiffer>
    <experiments>4</experiments>
</comment>
<comment type="interaction">
    <interactant intactId="EBI-2105113">
        <id>Q9UIV1</id>
    </interactant>
    <interactant intactId="EBI-723281">
        <id>P50616</id>
        <label>TOB1</label>
    </interactant>
    <organismsDiffer>false</organismsDiffer>
    <experiments>11</experiments>
</comment>
<comment type="interaction">
    <interactant intactId="EBI-2105113">
        <id>Q9UIV1</id>
    </interactant>
    <interactant intactId="EBI-2562000">
        <id>Q14106</id>
        <label>TOB2</label>
    </interactant>
    <organismsDiffer>false</organismsDiffer>
    <experiments>8</experiments>
</comment>
<comment type="interaction">
    <interactant intactId="EBI-2105113">
        <id>Q9UIV1</id>
    </interactant>
    <interactant intactId="EBI-647803">
        <id>P22893</id>
        <label>Zfp36</label>
    </interactant>
    <organismsDiffer>true</organismsDiffer>
    <experiments>3</experiments>
</comment>
<comment type="subcellular location">
    <subcellularLocation>
        <location evidence="15">Nucleus</location>
    </subcellularLocation>
    <subcellularLocation>
        <location evidence="1">Cytoplasm</location>
        <location evidence="1">P-body</location>
    </subcellularLocation>
    <subcellularLocation>
        <location evidence="13">Cytoplasm</location>
        <location evidence="13">Cytoplasmic ribonucleoprotein granule</location>
    </subcellularLocation>
    <text evidence="1 13">NANOS2 promotes its localization to P-body (By similarity). Recruited to cytoplasmic ribonucleoprotein membraneless compartments by CAPRIN1, promoting deadenylation of mRNAs (PubMed:31439799).</text>
</comment>
<comment type="alternative products">
    <event type="alternative splicing"/>
    <isoform>
        <id>Q9UIV1-1</id>
        <name>1</name>
        <sequence type="displayed"/>
    </isoform>
    <isoform>
        <id>Q9UIV1-2</id>
        <name>2</name>
        <sequence type="described" ref="VSP_045497"/>
    </isoform>
</comment>
<comment type="similarity">
    <text evidence="17">Belongs to the CAF1 family.</text>
</comment>
<comment type="sequence caution" evidence="17">
    <conflict type="frameshift">
        <sequence resource="EMBL-CDS" id="AAF01500"/>
    </conflict>
</comment>
<gene>
    <name type="primary">CNOT7</name>
    <name type="synonym">CAF1</name>
</gene>
<keyword id="KW-0002">3D-structure</keyword>
<keyword id="KW-0025">Alternative splicing</keyword>
<keyword id="KW-0963">Cytoplasm</keyword>
<keyword id="KW-0269">Exonuclease</keyword>
<keyword id="KW-0378">Hydrolase</keyword>
<keyword id="KW-0460">Magnesium</keyword>
<keyword id="KW-0479">Metal-binding</keyword>
<keyword id="KW-0540">Nuclease</keyword>
<keyword id="KW-0539">Nucleus</keyword>
<keyword id="KW-1267">Proteomics identification</keyword>
<keyword id="KW-1185">Reference proteome</keyword>
<keyword id="KW-0678">Repressor</keyword>
<keyword id="KW-0694">RNA-binding</keyword>
<keyword id="KW-0943">RNA-mediated gene silencing</keyword>
<keyword id="KW-0804">Transcription</keyword>
<keyword id="KW-0805">Transcription regulation</keyword>
<keyword id="KW-0810">Translation regulation</keyword>